<protein>
    <recommendedName>
        <fullName evidence="4">Ras-related protein Rab-42</fullName>
        <ecNumber evidence="1">3.6.5.2</ecNumber>
    </recommendedName>
</protein>
<evidence type="ECO:0000250" key="1">
    <source>
        <dbReference type="UniProtKB" id="P62820"/>
    </source>
</evidence>
<evidence type="ECO:0000256" key="2">
    <source>
        <dbReference type="SAM" id="MobiDB-lite"/>
    </source>
</evidence>
<evidence type="ECO:0000303" key="3">
    <source>
    </source>
</evidence>
<evidence type="ECO:0000305" key="4"/>
<evidence type="ECO:0000312" key="5">
    <source>
        <dbReference type="MGI" id="MGI:2441753"/>
    </source>
</evidence>
<dbReference type="EC" id="3.6.5.2" evidence="1"/>
<dbReference type="EMBL" id="AB232642">
    <property type="protein sequence ID" value="BAF02904.1"/>
    <property type="molecule type" value="mRNA"/>
</dbReference>
<dbReference type="EMBL" id="AL670276">
    <property type="status" value="NOT_ANNOTATED_CDS"/>
    <property type="molecule type" value="Genomic_DNA"/>
</dbReference>
<dbReference type="EMBL" id="BC132060">
    <property type="protein sequence ID" value="AAI32061.1"/>
    <property type="molecule type" value="mRNA"/>
</dbReference>
<dbReference type="EMBL" id="BC132062">
    <property type="protein sequence ID" value="AAI32063.1"/>
    <property type="molecule type" value="mRNA"/>
</dbReference>
<dbReference type="CCDS" id="CCDS38898.1"/>
<dbReference type="RefSeq" id="NP_001075120.1">
    <property type="nucleotide sequence ID" value="NM_001081651.1"/>
</dbReference>
<dbReference type="SMR" id="Q0PD08"/>
<dbReference type="FunCoup" id="Q0PD08">
    <property type="interactions" value="87"/>
</dbReference>
<dbReference type="STRING" id="10090.ENSMUSP00000047735"/>
<dbReference type="GlyGen" id="Q0PD08">
    <property type="glycosylation" value="1 site"/>
</dbReference>
<dbReference type="PhosphoSitePlus" id="Q0PD08"/>
<dbReference type="PaxDb" id="10090-ENSMUSP00000047735"/>
<dbReference type="PeptideAtlas" id="Q0PD08"/>
<dbReference type="ProteomicsDB" id="255066"/>
<dbReference type="Antibodypedia" id="30977">
    <property type="antibodies" value="59 antibodies from 15 providers"/>
</dbReference>
<dbReference type="Ensembl" id="ENSMUST00000040411.7">
    <property type="protein sequence ID" value="ENSMUSP00000047735.7"/>
    <property type="gene ID" value="ENSMUSG00000089687.3"/>
</dbReference>
<dbReference type="GeneID" id="242681"/>
<dbReference type="KEGG" id="mmu:242681"/>
<dbReference type="UCSC" id="uc008vay.1">
    <property type="organism name" value="mouse"/>
</dbReference>
<dbReference type="AGR" id="MGI:2441753"/>
<dbReference type="CTD" id="115273"/>
<dbReference type="MGI" id="MGI:2441753">
    <property type="gene designation" value="Rab42"/>
</dbReference>
<dbReference type="VEuPathDB" id="HostDB:ENSMUSG00000089687"/>
<dbReference type="eggNOG" id="KOG0091">
    <property type="taxonomic scope" value="Eukaryota"/>
</dbReference>
<dbReference type="GeneTree" id="ENSGT00940000162094"/>
<dbReference type="HOGENOM" id="CLU_041217_23_1_1"/>
<dbReference type="InParanoid" id="Q0PD08"/>
<dbReference type="OMA" id="FDMTNRR"/>
<dbReference type="OrthoDB" id="9989112at2759"/>
<dbReference type="PhylomeDB" id="Q0PD08"/>
<dbReference type="TreeFam" id="TF300032"/>
<dbReference type="BioGRID-ORCS" id="242681">
    <property type="hits" value="2 hits in 79 CRISPR screens"/>
</dbReference>
<dbReference type="ChiTaRS" id="Rab43">
    <property type="organism name" value="mouse"/>
</dbReference>
<dbReference type="PRO" id="PR:Q0PD08"/>
<dbReference type="Proteomes" id="UP000000589">
    <property type="component" value="Chromosome 4"/>
</dbReference>
<dbReference type="RNAct" id="Q0PD08">
    <property type="molecule type" value="protein"/>
</dbReference>
<dbReference type="Bgee" id="ENSMUSG00000089687">
    <property type="expression patterns" value="Expressed in spermatocyte and 56 other cell types or tissues"/>
</dbReference>
<dbReference type="GO" id="GO:0016020">
    <property type="term" value="C:membrane"/>
    <property type="evidence" value="ECO:0007669"/>
    <property type="project" value="UniProtKB-SubCell"/>
</dbReference>
<dbReference type="GO" id="GO:0005525">
    <property type="term" value="F:GTP binding"/>
    <property type="evidence" value="ECO:0007669"/>
    <property type="project" value="UniProtKB-KW"/>
</dbReference>
<dbReference type="GO" id="GO:0003924">
    <property type="term" value="F:GTPase activity"/>
    <property type="evidence" value="ECO:0007669"/>
    <property type="project" value="InterPro"/>
</dbReference>
<dbReference type="FunFam" id="3.40.50.300:FF:001428">
    <property type="entry name" value="putative Ras-related protein Rab-42"/>
    <property type="match status" value="1"/>
</dbReference>
<dbReference type="Gene3D" id="3.40.50.300">
    <property type="entry name" value="P-loop containing nucleotide triphosphate hydrolases"/>
    <property type="match status" value="1"/>
</dbReference>
<dbReference type="InterPro" id="IPR027417">
    <property type="entry name" value="P-loop_NTPase"/>
</dbReference>
<dbReference type="InterPro" id="IPR050209">
    <property type="entry name" value="Rab_GTPases_membrane_traffic"/>
</dbReference>
<dbReference type="InterPro" id="IPR005225">
    <property type="entry name" value="Small_GTP-bd"/>
</dbReference>
<dbReference type="InterPro" id="IPR001806">
    <property type="entry name" value="Small_GTPase"/>
</dbReference>
<dbReference type="NCBIfam" id="TIGR00231">
    <property type="entry name" value="small_GTP"/>
    <property type="match status" value="1"/>
</dbReference>
<dbReference type="PANTHER" id="PTHR47979">
    <property type="entry name" value="DRAB11-RELATED"/>
    <property type="match status" value="1"/>
</dbReference>
<dbReference type="Pfam" id="PF00071">
    <property type="entry name" value="Ras"/>
    <property type="match status" value="1"/>
</dbReference>
<dbReference type="PRINTS" id="PR00449">
    <property type="entry name" value="RASTRNSFRMNG"/>
</dbReference>
<dbReference type="SMART" id="SM00175">
    <property type="entry name" value="RAB"/>
    <property type="match status" value="1"/>
</dbReference>
<dbReference type="SMART" id="SM00176">
    <property type="entry name" value="RAN"/>
    <property type="match status" value="1"/>
</dbReference>
<dbReference type="SMART" id="SM00173">
    <property type="entry name" value="RAS"/>
    <property type="match status" value="1"/>
</dbReference>
<dbReference type="SMART" id="SM00174">
    <property type="entry name" value="RHO"/>
    <property type="match status" value="1"/>
</dbReference>
<dbReference type="SUPFAM" id="SSF52540">
    <property type="entry name" value="P-loop containing nucleoside triphosphate hydrolases"/>
    <property type="match status" value="1"/>
</dbReference>
<dbReference type="PROSITE" id="PS51419">
    <property type="entry name" value="RAB"/>
    <property type="match status" value="1"/>
</dbReference>
<keyword id="KW-0342">GTP-binding</keyword>
<keyword id="KW-0378">Hydrolase</keyword>
<keyword id="KW-0449">Lipoprotein</keyword>
<keyword id="KW-0460">Magnesium</keyword>
<keyword id="KW-0472">Membrane</keyword>
<keyword id="KW-0479">Metal-binding</keyword>
<keyword id="KW-0547">Nucleotide-binding</keyword>
<keyword id="KW-0636">Prenylation</keyword>
<keyword id="KW-1185">Reference proteome</keyword>
<gene>
    <name evidence="5" type="primary">Rab42</name>
    <name evidence="3" type="synonym">Rab43</name>
</gene>
<sequence>MEAAGCSYQFRIALLGDAGVGKTSLLRCYVAGARGAAEPDPEPTVGVEFYSRALQLPAGLRVKLQLWDTAGQECFRCITRSFYRNMVGVLLVFDVTNRESFEHIQAWHQEVVSTQGPDKVVFLLVGHKCDLNTRCVSSQEAEELAASLGMGFMETSAKSNCNVDLAFDTVTSAIEQALQQGDIKLDKDWAGVRLLHRSPNPRSSSRKQDSGTCQC</sequence>
<reference key="1">
    <citation type="journal article" date="2006" name="Genes Cells">
        <title>Screening for target Rabs of TBC (Tre-2/Bub2/Cdc16) domain-containing proteins based on their Rab-binding activity.</title>
        <authorList>
            <person name="Itoh T."/>
            <person name="Satoh M."/>
            <person name="Kanno E."/>
            <person name="Fukuda M."/>
        </authorList>
    </citation>
    <scope>NUCLEOTIDE SEQUENCE [MRNA]</scope>
    <source>
        <strain>BALB/cJ</strain>
    </source>
</reference>
<reference key="2">
    <citation type="journal article" date="2009" name="PLoS Biol.">
        <title>Lineage-specific biology revealed by a finished genome assembly of the mouse.</title>
        <authorList>
            <person name="Church D.M."/>
            <person name="Goodstadt L."/>
            <person name="Hillier L.W."/>
            <person name="Zody M.C."/>
            <person name="Goldstein S."/>
            <person name="She X."/>
            <person name="Bult C.J."/>
            <person name="Agarwala R."/>
            <person name="Cherry J.L."/>
            <person name="DiCuccio M."/>
            <person name="Hlavina W."/>
            <person name="Kapustin Y."/>
            <person name="Meric P."/>
            <person name="Maglott D."/>
            <person name="Birtle Z."/>
            <person name="Marques A.C."/>
            <person name="Graves T."/>
            <person name="Zhou S."/>
            <person name="Teague B."/>
            <person name="Potamousis K."/>
            <person name="Churas C."/>
            <person name="Place M."/>
            <person name="Herschleb J."/>
            <person name="Runnheim R."/>
            <person name="Forrest D."/>
            <person name="Amos-Landgraf J."/>
            <person name="Schwartz D.C."/>
            <person name="Cheng Z."/>
            <person name="Lindblad-Toh K."/>
            <person name="Eichler E.E."/>
            <person name="Ponting C.P."/>
        </authorList>
    </citation>
    <scope>NUCLEOTIDE SEQUENCE [LARGE SCALE GENOMIC DNA]</scope>
    <source>
        <strain>C57BL/6J</strain>
    </source>
</reference>
<reference key="3">
    <citation type="journal article" date="2004" name="Genome Res.">
        <title>The status, quality, and expansion of the NIH full-length cDNA project: the Mammalian Gene Collection (MGC).</title>
        <authorList>
            <consortium name="The MGC Project Team"/>
        </authorList>
    </citation>
    <scope>NUCLEOTIDE SEQUENCE [LARGE SCALE MRNA]</scope>
    <source>
        <tissue>Brain</tissue>
    </source>
</reference>
<feature type="chain" id="PRO_0000442580" description="Ras-related protein Rab-42">
    <location>
        <begin position="1"/>
        <end position="215"/>
    </location>
</feature>
<feature type="region of interest" description="Disordered" evidence="2">
    <location>
        <begin position="196"/>
        <end position="215"/>
    </location>
</feature>
<feature type="binding site" evidence="1">
    <location>
        <position position="19"/>
    </location>
    <ligand>
        <name>GTP</name>
        <dbReference type="ChEBI" id="CHEBI:37565"/>
    </ligand>
</feature>
<feature type="binding site" evidence="1">
    <location>
        <position position="21"/>
    </location>
    <ligand>
        <name>GTP</name>
        <dbReference type="ChEBI" id="CHEBI:37565"/>
    </ligand>
</feature>
<feature type="binding site" evidence="1">
    <location>
        <position position="22"/>
    </location>
    <ligand>
        <name>GTP</name>
        <dbReference type="ChEBI" id="CHEBI:37565"/>
    </ligand>
</feature>
<feature type="binding site" evidence="1">
    <location>
        <position position="23"/>
    </location>
    <ligand>
        <name>GTP</name>
        <dbReference type="ChEBI" id="CHEBI:37565"/>
    </ligand>
</feature>
<feature type="binding site" evidence="1">
    <location>
        <position position="23"/>
    </location>
    <ligand>
        <name>Mg(2+)</name>
        <dbReference type="ChEBI" id="CHEBI:18420"/>
    </ligand>
</feature>
<feature type="binding site" evidence="1">
    <location>
        <position position="44"/>
    </location>
    <ligand>
        <name>GTP</name>
        <dbReference type="ChEBI" id="CHEBI:37565"/>
    </ligand>
</feature>
<feature type="binding site" evidence="1">
    <location>
        <position position="44"/>
    </location>
    <ligand>
        <name>Mg(2+)</name>
        <dbReference type="ChEBI" id="CHEBI:18420"/>
    </ligand>
</feature>
<feature type="binding site" evidence="1">
    <location>
        <position position="68"/>
    </location>
    <ligand>
        <name>Mg(2+)</name>
        <dbReference type="ChEBI" id="CHEBI:18420"/>
    </ligand>
</feature>
<feature type="binding site" evidence="1">
    <location>
        <position position="71"/>
    </location>
    <ligand>
        <name>GTP</name>
        <dbReference type="ChEBI" id="CHEBI:37565"/>
    </ligand>
</feature>
<feature type="binding site" evidence="1">
    <location>
        <position position="128"/>
    </location>
    <ligand>
        <name>GTP</name>
        <dbReference type="ChEBI" id="CHEBI:37565"/>
    </ligand>
</feature>
<feature type="binding site" evidence="1">
    <location>
        <position position="130"/>
    </location>
    <ligand>
        <name>GTP</name>
        <dbReference type="ChEBI" id="CHEBI:37565"/>
    </ligand>
</feature>
<feature type="binding site" evidence="1">
    <location>
        <position position="157"/>
    </location>
    <ligand>
        <name>GTP</name>
        <dbReference type="ChEBI" id="CHEBI:37565"/>
    </ligand>
</feature>
<feature type="binding site" evidence="1">
    <location>
        <position position="158"/>
    </location>
    <ligand>
        <name>GTP</name>
        <dbReference type="ChEBI" id="CHEBI:37565"/>
    </ligand>
</feature>
<feature type="lipid moiety-binding region" description="S-geranylgeranyl cysteine" evidence="1">
    <location>
        <position position="213"/>
    </location>
</feature>
<feature type="lipid moiety-binding region" description="S-geranylgeranyl cysteine" evidence="1">
    <location>
        <position position="215"/>
    </location>
</feature>
<organism>
    <name type="scientific">Mus musculus</name>
    <name type="common">Mouse</name>
    <dbReference type="NCBI Taxonomy" id="10090"/>
    <lineage>
        <taxon>Eukaryota</taxon>
        <taxon>Metazoa</taxon>
        <taxon>Chordata</taxon>
        <taxon>Craniata</taxon>
        <taxon>Vertebrata</taxon>
        <taxon>Euteleostomi</taxon>
        <taxon>Mammalia</taxon>
        <taxon>Eutheria</taxon>
        <taxon>Euarchontoglires</taxon>
        <taxon>Glires</taxon>
        <taxon>Rodentia</taxon>
        <taxon>Myomorpha</taxon>
        <taxon>Muroidea</taxon>
        <taxon>Muridae</taxon>
        <taxon>Murinae</taxon>
        <taxon>Mus</taxon>
        <taxon>Mus</taxon>
    </lineage>
</organism>
<accession>Q0PD08</accession>
<comment type="function">
    <text evidence="1 4">The small GTPases Rab are key regulators of intracellular membrane trafficking, from the formation of transport vesicles to their fusion with membranes. Rabs cycle between an inactive GDP-bound form and an active GTP-bound form that is able to recruit to membranes different sets of downstream effectors directly responsible for vesicle formation, movement, tethering and fusion (By similarity). The physiological function of RAB42 remains undefined (Probable).</text>
</comment>
<comment type="catalytic activity">
    <reaction evidence="1">
        <text>GTP + H2O = GDP + phosphate + H(+)</text>
        <dbReference type="Rhea" id="RHEA:19669"/>
        <dbReference type="ChEBI" id="CHEBI:15377"/>
        <dbReference type="ChEBI" id="CHEBI:15378"/>
        <dbReference type="ChEBI" id="CHEBI:37565"/>
        <dbReference type="ChEBI" id="CHEBI:43474"/>
        <dbReference type="ChEBI" id="CHEBI:58189"/>
        <dbReference type="EC" id="3.6.5.2"/>
    </reaction>
    <physiologicalReaction direction="left-to-right" evidence="1">
        <dbReference type="Rhea" id="RHEA:19670"/>
    </physiologicalReaction>
</comment>
<comment type="cofactor">
    <cofactor evidence="1">
        <name>Mg(2+)</name>
        <dbReference type="ChEBI" id="CHEBI:18420"/>
    </cofactor>
</comment>
<comment type="activity regulation">
    <text evidence="1">Regulated by guanine nucleotide exchange factors (GEFs) which promote the exchange of bound GDP for free GTP. Regulated by GTPase activating proteins (GAPs) which increase the GTP hydrolysis activity. Inhibited by GDP dissociation inhibitors (GDIs).</text>
</comment>
<comment type="subcellular location">
    <subcellularLocation>
        <location evidence="1">Membrane</location>
        <topology evidence="1">Lipid-anchor</topology>
    </subcellularLocation>
</comment>
<comment type="domain">
    <text evidence="1">Switch I, switch II and the interswitch regions are characteristic of Rab GTPases and mediate the interactions with Rab downstream effectors. The switch regions undergo conformational changes upon nucleotide binding which drive interaction with specific sets of effector proteins, with most effectors only binding to GTP-bound Rab.</text>
</comment>
<comment type="similarity">
    <text evidence="4">Belongs to the small GTPase superfamily. Rab family.</text>
</comment>
<name>RAB42_MOUSE</name>
<proteinExistence type="evidence at transcript level"/>